<gene>
    <name evidence="1" type="primary">rimM</name>
    <name type="ordered locus">TDE_0883</name>
</gene>
<dbReference type="EMBL" id="AE017226">
    <property type="protein sequence ID" value="AAS11374.1"/>
    <property type="molecule type" value="Genomic_DNA"/>
</dbReference>
<dbReference type="RefSeq" id="NP_971493.1">
    <property type="nucleotide sequence ID" value="NC_002967.9"/>
</dbReference>
<dbReference type="RefSeq" id="WP_002670218.1">
    <property type="nucleotide sequence ID" value="NC_002967.9"/>
</dbReference>
<dbReference type="SMR" id="Q73PB6"/>
<dbReference type="STRING" id="243275.TDE_0883"/>
<dbReference type="PaxDb" id="243275-TDE_0883"/>
<dbReference type="GeneID" id="2739757"/>
<dbReference type="KEGG" id="tde:TDE_0883"/>
<dbReference type="PATRIC" id="fig|243275.7.peg.853"/>
<dbReference type="eggNOG" id="COG0806">
    <property type="taxonomic scope" value="Bacteria"/>
</dbReference>
<dbReference type="HOGENOM" id="CLU_077636_3_2_12"/>
<dbReference type="OrthoDB" id="9810331at2"/>
<dbReference type="Proteomes" id="UP000008212">
    <property type="component" value="Chromosome"/>
</dbReference>
<dbReference type="GO" id="GO:0005737">
    <property type="term" value="C:cytoplasm"/>
    <property type="evidence" value="ECO:0007669"/>
    <property type="project" value="UniProtKB-SubCell"/>
</dbReference>
<dbReference type="GO" id="GO:0005840">
    <property type="term" value="C:ribosome"/>
    <property type="evidence" value="ECO:0007669"/>
    <property type="project" value="InterPro"/>
</dbReference>
<dbReference type="GO" id="GO:0043022">
    <property type="term" value="F:ribosome binding"/>
    <property type="evidence" value="ECO:0007669"/>
    <property type="project" value="InterPro"/>
</dbReference>
<dbReference type="GO" id="GO:0042274">
    <property type="term" value="P:ribosomal small subunit biogenesis"/>
    <property type="evidence" value="ECO:0007669"/>
    <property type="project" value="UniProtKB-UniRule"/>
</dbReference>
<dbReference type="GO" id="GO:0006364">
    <property type="term" value="P:rRNA processing"/>
    <property type="evidence" value="ECO:0007669"/>
    <property type="project" value="UniProtKB-UniRule"/>
</dbReference>
<dbReference type="Gene3D" id="2.30.30.240">
    <property type="entry name" value="PRC-barrel domain"/>
    <property type="match status" value="1"/>
</dbReference>
<dbReference type="Gene3D" id="2.40.30.60">
    <property type="entry name" value="RimM"/>
    <property type="match status" value="1"/>
</dbReference>
<dbReference type="HAMAP" id="MF_00014">
    <property type="entry name" value="Ribosome_mat_RimM"/>
    <property type="match status" value="1"/>
</dbReference>
<dbReference type="InterPro" id="IPR011033">
    <property type="entry name" value="PRC_barrel-like_sf"/>
</dbReference>
<dbReference type="InterPro" id="IPR056792">
    <property type="entry name" value="PRC_RimM"/>
</dbReference>
<dbReference type="InterPro" id="IPR011961">
    <property type="entry name" value="RimM"/>
</dbReference>
<dbReference type="InterPro" id="IPR002676">
    <property type="entry name" value="RimM_N"/>
</dbReference>
<dbReference type="InterPro" id="IPR036976">
    <property type="entry name" value="RimM_N_sf"/>
</dbReference>
<dbReference type="InterPro" id="IPR009000">
    <property type="entry name" value="Transl_B-barrel_sf"/>
</dbReference>
<dbReference type="NCBIfam" id="TIGR02273">
    <property type="entry name" value="16S_RimM"/>
    <property type="match status" value="1"/>
</dbReference>
<dbReference type="PANTHER" id="PTHR33692">
    <property type="entry name" value="RIBOSOME MATURATION FACTOR RIMM"/>
    <property type="match status" value="1"/>
</dbReference>
<dbReference type="PANTHER" id="PTHR33692:SF1">
    <property type="entry name" value="RIBOSOME MATURATION FACTOR RIMM"/>
    <property type="match status" value="1"/>
</dbReference>
<dbReference type="Pfam" id="PF24986">
    <property type="entry name" value="PRC_RimM"/>
    <property type="match status" value="1"/>
</dbReference>
<dbReference type="Pfam" id="PF01782">
    <property type="entry name" value="RimM"/>
    <property type="match status" value="1"/>
</dbReference>
<dbReference type="SUPFAM" id="SSF50346">
    <property type="entry name" value="PRC-barrel domain"/>
    <property type="match status" value="1"/>
</dbReference>
<dbReference type="SUPFAM" id="SSF50447">
    <property type="entry name" value="Translation proteins"/>
    <property type="match status" value="1"/>
</dbReference>
<evidence type="ECO:0000255" key="1">
    <source>
        <dbReference type="HAMAP-Rule" id="MF_00014"/>
    </source>
</evidence>
<protein>
    <recommendedName>
        <fullName evidence="1">Ribosome maturation factor RimM</fullName>
    </recommendedName>
</protein>
<reference key="1">
    <citation type="journal article" date="2004" name="Proc. Natl. Acad. Sci. U.S.A.">
        <title>Comparison of the genome of the oral pathogen Treponema denticola with other spirochete genomes.</title>
        <authorList>
            <person name="Seshadri R."/>
            <person name="Myers G.S.A."/>
            <person name="Tettelin H."/>
            <person name="Eisen J.A."/>
            <person name="Heidelberg J.F."/>
            <person name="Dodson R.J."/>
            <person name="Davidsen T.M."/>
            <person name="DeBoy R.T."/>
            <person name="Fouts D.E."/>
            <person name="Haft D.H."/>
            <person name="Selengut J."/>
            <person name="Ren Q."/>
            <person name="Brinkac L.M."/>
            <person name="Madupu R."/>
            <person name="Kolonay J.F."/>
            <person name="Durkin S.A."/>
            <person name="Daugherty S.C."/>
            <person name="Shetty J."/>
            <person name="Shvartsbeyn A."/>
            <person name="Gebregeorgis E."/>
            <person name="Geer K."/>
            <person name="Tsegaye G."/>
            <person name="Malek J.A."/>
            <person name="Ayodeji B."/>
            <person name="Shatsman S."/>
            <person name="McLeod M.P."/>
            <person name="Smajs D."/>
            <person name="Howell J.K."/>
            <person name="Pal S."/>
            <person name="Amin A."/>
            <person name="Vashisth P."/>
            <person name="McNeill T.Z."/>
            <person name="Xiang Q."/>
            <person name="Sodergren E."/>
            <person name="Baca E."/>
            <person name="Weinstock G.M."/>
            <person name="Norris S.J."/>
            <person name="Fraser C.M."/>
            <person name="Paulsen I.T."/>
        </authorList>
    </citation>
    <scope>NUCLEOTIDE SEQUENCE [LARGE SCALE GENOMIC DNA]</scope>
    <source>
        <strain>ATCC 35405 / DSM 14222 / CIP 103919 / JCM 8153 / KCTC 15104</strain>
    </source>
</reference>
<feature type="chain" id="PRO_0000163382" description="Ribosome maturation factor RimM">
    <location>
        <begin position="1"/>
        <end position="179"/>
    </location>
</feature>
<feature type="domain" description="PRC barrel" evidence="1">
    <location>
        <begin position="101"/>
        <end position="179"/>
    </location>
</feature>
<sequence length="179" mass="19977">MDLLATGRIRGTFGIEGFVKVESFSGEYEHFLGFDRVFLSILKEKLREQKYKDGWFEIEEVNLRKADALVKFKGIDNPEAAKCLTGSELFIPRDKAAPLDEGEVYVHDLCNCNLVCEGTLVGKITSVAEGGGGYLLEIAGKTSEAAAESSFYVPFNKEFIGKIDLKAKTVELMHRWILE</sequence>
<accession>Q73PB6</accession>
<comment type="function">
    <text evidence="1">An accessory protein needed during the final step in the assembly of 30S ribosomal subunit, possibly for assembly of the head region. Essential for efficient processing of 16S rRNA. May be needed both before and after RbfA during the maturation of 16S rRNA. It has affinity for free ribosomal 30S subunits but not for 70S ribosomes.</text>
</comment>
<comment type="subunit">
    <text evidence="1">Binds ribosomal protein uS19.</text>
</comment>
<comment type="subcellular location">
    <subcellularLocation>
        <location evidence="1">Cytoplasm</location>
    </subcellularLocation>
</comment>
<comment type="domain">
    <text evidence="1">The PRC barrel domain binds ribosomal protein uS19.</text>
</comment>
<comment type="similarity">
    <text evidence="1">Belongs to the RimM family.</text>
</comment>
<name>RIMM_TREDE</name>
<organism>
    <name type="scientific">Treponema denticola (strain ATCC 35405 / DSM 14222 / CIP 103919 / JCM 8153 / KCTC 15104)</name>
    <dbReference type="NCBI Taxonomy" id="243275"/>
    <lineage>
        <taxon>Bacteria</taxon>
        <taxon>Pseudomonadati</taxon>
        <taxon>Spirochaetota</taxon>
        <taxon>Spirochaetia</taxon>
        <taxon>Spirochaetales</taxon>
        <taxon>Treponemataceae</taxon>
        <taxon>Treponema</taxon>
    </lineage>
</organism>
<keyword id="KW-0143">Chaperone</keyword>
<keyword id="KW-0963">Cytoplasm</keyword>
<keyword id="KW-1185">Reference proteome</keyword>
<keyword id="KW-0690">Ribosome biogenesis</keyword>
<keyword id="KW-0698">rRNA processing</keyword>
<proteinExistence type="inferred from homology"/>